<evidence type="ECO:0000255" key="1"/>
<evidence type="ECO:0000255" key="2">
    <source>
        <dbReference type="HAMAP-Rule" id="MF_03021"/>
    </source>
</evidence>
<evidence type="ECO:0000256" key="3">
    <source>
        <dbReference type="SAM" id="MobiDB-lite"/>
    </source>
</evidence>
<gene>
    <name type="ORF">DDB_G0287165</name>
</gene>
<comment type="function">
    <text evidence="2">ATP-dependent microtubule severing protein. Microtubule severing may promote reorganization of cellular microtubule arrays and the release of microtubules from the microtubule organizing center following nucleation.</text>
</comment>
<comment type="catalytic activity">
    <reaction evidence="2">
        <text>n ATP + n H2O + a microtubule = n ADP + n phosphate + (n+1) alpha/beta tubulin heterodimers.</text>
        <dbReference type="EC" id="5.6.1.1"/>
    </reaction>
</comment>
<comment type="subunit">
    <text evidence="2">Homohexamer. The homohexamer is stabilized by ATP-binding. The homohexamer may adopt a ring conformation through which microtubules pass prior to being severed. Interacts with microtubules.</text>
</comment>
<comment type="subcellular location">
    <subcellularLocation>
        <location evidence="2">Membrane</location>
        <topology evidence="2">Peripheral membrane protein</topology>
    </subcellularLocation>
    <subcellularLocation>
        <location evidence="2">Cytoplasm</location>
        <location evidence="2">Cytoskeleton</location>
        <location evidence="2">Microtubule organizing center</location>
        <location evidence="2">Centrosome</location>
    </subcellularLocation>
    <subcellularLocation>
        <location evidence="2">Cytoplasm</location>
        <location evidence="2">Cytoskeleton</location>
    </subcellularLocation>
    <text evidence="2">Forms an intramembrane hairpin-like structure in the membrane.</text>
</comment>
<comment type="similarity">
    <text evidence="2">Belongs to the AAA ATPase family. Spastin subfamily.</text>
</comment>
<accession>Q54KQ7</accession>
<protein>
    <recommendedName>
        <fullName evidence="2">Spastin</fullName>
        <ecNumber evidence="2">5.6.1.1</ecNumber>
    </recommendedName>
</protein>
<organism>
    <name type="scientific">Dictyostelium discoideum</name>
    <name type="common">Social amoeba</name>
    <dbReference type="NCBI Taxonomy" id="44689"/>
    <lineage>
        <taxon>Eukaryota</taxon>
        <taxon>Amoebozoa</taxon>
        <taxon>Evosea</taxon>
        <taxon>Eumycetozoa</taxon>
        <taxon>Dictyostelia</taxon>
        <taxon>Dictyosteliales</taxon>
        <taxon>Dictyosteliaceae</taxon>
        <taxon>Dictyostelium</taxon>
    </lineage>
</organism>
<keyword id="KW-0067">ATP-binding</keyword>
<keyword id="KW-0963">Cytoplasm</keyword>
<keyword id="KW-0206">Cytoskeleton</keyword>
<keyword id="KW-0413">Isomerase</keyword>
<keyword id="KW-0472">Membrane</keyword>
<keyword id="KW-0493">Microtubule</keyword>
<keyword id="KW-0547">Nucleotide-binding</keyword>
<keyword id="KW-1185">Reference proteome</keyword>
<name>SPAST_DICDI</name>
<feature type="chain" id="PRO_0000367155" description="Spastin">
    <location>
        <begin position="1"/>
        <end position="655"/>
    </location>
</feature>
<feature type="topological domain" description="Cytoplasmic" evidence="2">
    <location>
        <begin position="1"/>
        <end position="58"/>
    </location>
</feature>
<feature type="intramembrane region" description="Helical" evidence="2">
    <location>
        <begin position="59"/>
        <end position="79"/>
    </location>
</feature>
<feature type="topological domain" description="Cytoplasmic" evidence="2">
    <location>
        <begin position="80"/>
        <end position="655"/>
    </location>
</feature>
<feature type="domain" description="MIT" evidence="1">
    <location>
        <begin position="169"/>
        <end position="232"/>
    </location>
</feature>
<feature type="region of interest" description="Disordered" evidence="3">
    <location>
        <begin position="102"/>
        <end position="151"/>
    </location>
</feature>
<feature type="region of interest" description="Disordered" evidence="3">
    <location>
        <begin position="261"/>
        <end position="325"/>
    </location>
</feature>
<feature type="compositionally biased region" description="Low complexity" evidence="3">
    <location>
        <begin position="102"/>
        <end position="140"/>
    </location>
</feature>
<feature type="compositionally biased region" description="Pro residues" evidence="3">
    <location>
        <begin position="141"/>
        <end position="151"/>
    </location>
</feature>
<feature type="compositionally biased region" description="Low complexity" evidence="3">
    <location>
        <begin position="262"/>
        <end position="320"/>
    </location>
</feature>
<feature type="binding site" evidence="2">
    <location>
        <begin position="424"/>
        <end position="431"/>
    </location>
    <ligand>
        <name>ATP</name>
        <dbReference type="ChEBI" id="CHEBI:30616"/>
    </ligand>
</feature>
<sequence length="655" mass="73762">MLFDLINSFLKNGINNSNNNNNNNNNKNNFYNSLEDDDYLLNNQTTKVSLYLYFFIFAFMFLVVDLIMLYYKHRENIESRETDLSLKLNKMLIDFENDNKIKSSPTTSTTTTTITPTTTSSSQLRQPSTPKTTTKTINSPPSTPKSPPPLPSLESKLLYKDDIKQQLSLNEAKSQIDSAKQLDESLKYNSCIKLYIDGIEKLMALFSSYNSKEYRDYIDFYLKRAEYLKNELKKGTNLKSITNFNNFSKEYQINYNNKILEQQQQQQQQSSSTYRNSLNLSSSKSNSTINNRHSISSLSSLNSTTATTTTPSNTSTITSPGNKYGLQKSLSSTTLSLKKSSNSTNFQQPSPPSMVIPDIKGIDKSMVTLIMNEIMDRKNPVKWDDVVGLDKVKQSLMESVILPNLRPDVFTGLRAPPKGLLLFGPPGNGKTMIAKAVAYESKVTFFSISSSSLTSKYVGDGEKLVRALFAVATHFQPSIIFIDEIDSLLTERSSNESEASRRLKTEILVQFDGARTNGDERVLVMGATNRPEDLDDAALRRLVKRIYVGLPELETRLQIIQHLLVGQRHSLTKQQINSLAEVTQGYSGFDLAALCKDAAYEPIRRLGIGIKDLELNEISLISFKDFANSLKQIRPSVTSQSLKSFEKWNQKFGTI</sequence>
<reference key="1">
    <citation type="journal article" date="2005" name="Nature">
        <title>The genome of the social amoeba Dictyostelium discoideum.</title>
        <authorList>
            <person name="Eichinger L."/>
            <person name="Pachebat J.A."/>
            <person name="Gloeckner G."/>
            <person name="Rajandream M.A."/>
            <person name="Sucgang R."/>
            <person name="Berriman M."/>
            <person name="Song J."/>
            <person name="Olsen R."/>
            <person name="Szafranski K."/>
            <person name="Xu Q."/>
            <person name="Tunggal B."/>
            <person name="Kummerfeld S."/>
            <person name="Madera M."/>
            <person name="Konfortov B.A."/>
            <person name="Rivero F."/>
            <person name="Bankier A.T."/>
            <person name="Lehmann R."/>
            <person name="Hamlin N."/>
            <person name="Davies R."/>
            <person name="Gaudet P."/>
            <person name="Fey P."/>
            <person name="Pilcher K."/>
            <person name="Chen G."/>
            <person name="Saunders D."/>
            <person name="Sodergren E.J."/>
            <person name="Davis P."/>
            <person name="Kerhornou A."/>
            <person name="Nie X."/>
            <person name="Hall N."/>
            <person name="Anjard C."/>
            <person name="Hemphill L."/>
            <person name="Bason N."/>
            <person name="Farbrother P."/>
            <person name="Desany B."/>
            <person name="Just E."/>
            <person name="Morio T."/>
            <person name="Rost R."/>
            <person name="Churcher C.M."/>
            <person name="Cooper J."/>
            <person name="Haydock S."/>
            <person name="van Driessche N."/>
            <person name="Cronin A."/>
            <person name="Goodhead I."/>
            <person name="Muzny D.M."/>
            <person name="Mourier T."/>
            <person name="Pain A."/>
            <person name="Lu M."/>
            <person name="Harper D."/>
            <person name="Lindsay R."/>
            <person name="Hauser H."/>
            <person name="James K.D."/>
            <person name="Quiles M."/>
            <person name="Madan Babu M."/>
            <person name="Saito T."/>
            <person name="Buchrieser C."/>
            <person name="Wardroper A."/>
            <person name="Felder M."/>
            <person name="Thangavelu M."/>
            <person name="Johnson D."/>
            <person name="Knights A."/>
            <person name="Loulseged H."/>
            <person name="Mungall K.L."/>
            <person name="Oliver K."/>
            <person name="Price C."/>
            <person name="Quail M.A."/>
            <person name="Urushihara H."/>
            <person name="Hernandez J."/>
            <person name="Rabbinowitsch E."/>
            <person name="Steffen D."/>
            <person name="Sanders M."/>
            <person name="Ma J."/>
            <person name="Kohara Y."/>
            <person name="Sharp S."/>
            <person name="Simmonds M.N."/>
            <person name="Spiegler S."/>
            <person name="Tivey A."/>
            <person name="Sugano S."/>
            <person name="White B."/>
            <person name="Walker D."/>
            <person name="Woodward J.R."/>
            <person name="Winckler T."/>
            <person name="Tanaka Y."/>
            <person name="Shaulsky G."/>
            <person name="Schleicher M."/>
            <person name="Weinstock G.M."/>
            <person name="Rosenthal A."/>
            <person name="Cox E.C."/>
            <person name="Chisholm R.L."/>
            <person name="Gibbs R.A."/>
            <person name="Loomis W.F."/>
            <person name="Platzer M."/>
            <person name="Kay R.R."/>
            <person name="Williams J.G."/>
            <person name="Dear P.H."/>
            <person name="Noegel A.A."/>
            <person name="Barrell B.G."/>
            <person name="Kuspa A."/>
        </authorList>
    </citation>
    <scope>NUCLEOTIDE SEQUENCE [LARGE SCALE GENOMIC DNA]</scope>
    <source>
        <strain>AX4</strain>
    </source>
</reference>
<proteinExistence type="inferred from homology"/>
<dbReference type="EC" id="5.6.1.1" evidence="2"/>
<dbReference type="EMBL" id="AAFI02000098">
    <property type="protein sequence ID" value="EAL63857.1"/>
    <property type="molecule type" value="Genomic_DNA"/>
</dbReference>
<dbReference type="RefSeq" id="XP_637373.1">
    <property type="nucleotide sequence ID" value="XM_632281.1"/>
</dbReference>
<dbReference type="SMR" id="Q54KQ7"/>
<dbReference type="FunCoup" id="Q54KQ7">
    <property type="interactions" value="2"/>
</dbReference>
<dbReference type="STRING" id="44689.Q54KQ7"/>
<dbReference type="PaxDb" id="44689-DDB0231319"/>
<dbReference type="EnsemblProtists" id="EAL63857">
    <property type="protein sequence ID" value="EAL63857"/>
    <property type="gene ID" value="DDB_G0287165"/>
</dbReference>
<dbReference type="GeneID" id="8625995"/>
<dbReference type="KEGG" id="ddi:DDB_G0287165"/>
<dbReference type="dictyBase" id="DDB_G0287165"/>
<dbReference type="VEuPathDB" id="AmoebaDB:DDB_G0287165"/>
<dbReference type="eggNOG" id="KOG0740">
    <property type="taxonomic scope" value="Eukaryota"/>
</dbReference>
<dbReference type="HOGENOM" id="CLU_000688_21_5_1"/>
<dbReference type="InParanoid" id="Q54KQ7"/>
<dbReference type="OMA" id="RLQIIQH"/>
<dbReference type="Reactome" id="R-DDI-9668328">
    <property type="pathway name" value="Sealing of the nuclear envelope (NE) by ESCRT-III"/>
</dbReference>
<dbReference type="PRO" id="PR:Q54KQ7"/>
<dbReference type="Proteomes" id="UP000002195">
    <property type="component" value="Chromosome 4"/>
</dbReference>
<dbReference type="GO" id="GO:0005813">
    <property type="term" value="C:centrosome"/>
    <property type="evidence" value="ECO:0007669"/>
    <property type="project" value="UniProtKB-SubCell"/>
</dbReference>
<dbReference type="GO" id="GO:0005737">
    <property type="term" value="C:cytoplasm"/>
    <property type="evidence" value="ECO:0007669"/>
    <property type="project" value="UniProtKB-UniRule"/>
</dbReference>
<dbReference type="GO" id="GO:0005874">
    <property type="term" value="C:microtubule"/>
    <property type="evidence" value="ECO:0000314"/>
    <property type="project" value="dictyBase"/>
</dbReference>
<dbReference type="GO" id="GO:0015630">
    <property type="term" value="C:microtubule cytoskeleton"/>
    <property type="evidence" value="ECO:0000318"/>
    <property type="project" value="GO_Central"/>
</dbReference>
<dbReference type="GO" id="GO:0097431">
    <property type="term" value="C:mitotic spindle pole"/>
    <property type="evidence" value="ECO:0000314"/>
    <property type="project" value="dictyBase"/>
</dbReference>
<dbReference type="GO" id="GO:0005640">
    <property type="term" value="C:nuclear outer membrane"/>
    <property type="evidence" value="ECO:0000314"/>
    <property type="project" value="dictyBase"/>
</dbReference>
<dbReference type="GO" id="GO:0051233">
    <property type="term" value="C:spindle midzone"/>
    <property type="evidence" value="ECO:0000314"/>
    <property type="project" value="dictyBase"/>
</dbReference>
<dbReference type="GO" id="GO:0005524">
    <property type="term" value="F:ATP binding"/>
    <property type="evidence" value="ECO:0007669"/>
    <property type="project" value="UniProtKB-UniRule"/>
</dbReference>
<dbReference type="GO" id="GO:0016887">
    <property type="term" value="F:ATP hydrolysis activity"/>
    <property type="evidence" value="ECO:0000318"/>
    <property type="project" value="GO_Central"/>
</dbReference>
<dbReference type="GO" id="GO:0008017">
    <property type="term" value="F:microtubule binding"/>
    <property type="evidence" value="ECO:0007669"/>
    <property type="project" value="UniProtKB-UniRule"/>
</dbReference>
<dbReference type="GO" id="GO:0008568">
    <property type="term" value="F:microtubule severing ATPase activity"/>
    <property type="evidence" value="ECO:0000314"/>
    <property type="project" value="dictyBase"/>
</dbReference>
<dbReference type="GO" id="GO:0015631">
    <property type="term" value="F:tubulin binding"/>
    <property type="evidence" value="ECO:0000314"/>
    <property type="project" value="dictyBase"/>
</dbReference>
<dbReference type="GO" id="GO:0051013">
    <property type="term" value="P:microtubule severing"/>
    <property type="evidence" value="ECO:0007669"/>
    <property type="project" value="UniProtKB-UniRule"/>
</dbReference>
<dbReference type="GO" id="GO:0006998">
    <property type="term" value="P:nuclear envelope organization"/>
    <property type="evidence" value="ECO:0000314"/>
    <property type="project" value="dictyBase"/>
</dbReference>
<dbReference type="GO" id="GO:0031117">
    <property type="term" value="P:positive regulation of microtubule depolymerization"/>
    <property type="evidence" value="ECO:0007669"/>
    <property type="project" value="UniProtKB-UniRule"/>
</dbReference>
<dbReference type="GO" id="GO:0034214">
    <property type="term" value="P:protein hexamerization"/>
    <property type="evidence" value="ECO:0007669"/>
    <property type="project" value="UniProtKB-UniRule"/>
</dbReference>
<dbReference type="FunFam" id="1.10.8.60:FF:000022">
    <property type="entry name" value="Fidgetin like 1"/>
    <property type="match status" value="1"/>
</dbReference>
<dbReference type="FunFam" id="3.40.50.300:FF:000093">
    <property type="entry name" value="Fidgetin-like 1"/>
    <property type="match status" value="1"/>
</dbReference>
<dbReference type="Gene3D" id="1.10.8.60">
    <property type="match status" value="1"/>
</dbReference>
<dbReference type="Gene3D" id="3.40.50.300">
    <property type="entry name" value="P-loop containing nucleotide triphosphate hydrolases"/>
    <property type="match status" value="1"/>
</dbReference>
<dbReference type="Gene3D" id="1.20.58.80">
    <property type="entry name" value="Phosphotransferase system, lactose/cellobiose-type IIA subunit"/>
    <property type="match status" value="1"/>
</dbReference>
<dbReference type="HAMAP" id="MF_03021">
    <property type="entry name" value="Spastin"/>
    <property type="match status" value="1"/>
</dbReference>
<dbReference type="InterPro" id="IPR003593">
    <property type="entry name" value="AAA+_ATPase"/>
</dbReference>
<dbReference type="InterPro" id="IPR041569">
    <property type="entry name" value="AAA_lid_3"/>
</dbReference>
<dbReference type="InterPro" id="IPR003959">
    <property type="entry name" value="ATPase_AAA_core"/>
</dbReference>
<dbReference type="InterPro" id="IPR003960">
    <property type="entry name" value="ATPase_AAA_CS"/>
</dbReference>
<dbReference type="InterPro" id="IPR007330">
    <property type="entry name" value="MIT_dom"/>
</dbReference>
<dbReference type="InterPro" id="IPR036181">
    <property type="entry name" value="MIT_dom_sf"/>
</dbReference>
<dbReference type="InterPro" id="IPR050304">
    <property type="entry name" value="MT-severing_AAA_ATPase"/>
</dbReference>
<dbReference type="InterPro" id="IPR027417">
    <property type="entry name" value="P-loop_NTPase"/>
</dbReference>
<dbReference type="InterPro" id="IPR015415">
    <property type="entry name" value="Spast_Vps4_C"/>
</dbReference>
<dbReference type="InterPro" id="IPR017179">
    <property type="entry name" value="Spastin"/>
</dbReference>
<dbReference type="PANTHER" id="PTHR23074">
    <property type="entry name" value="AAA DOMAIN-CONTAINING"/>
    <property type="match status" value="1"/>
</dbReference>
<dbReference type="PANTHER" id="PTHR23074:SF86">
    <property type="entry name" value="SPASTIN"/>
    <property type="match status" value="1"/>
</dbReference>
<dbReference type="Pfam" id="PF00004">
    <property type="entry name" value="AAA"/>
    <property type="match status" value="1"/>
</dbReference>
<dbReference type="Pfam" id="PF17862">
    <property type="entry name" value="AAA_lid_3"/>
    <property type="match status" value="1"/>
</dbReference>
<dbReference type="Pfam" id="PF04212">
    <property type="entry name" value="MIT"/>
    <property type="match status" value="1"/>
</dbReference>
<dbReference type="Pfam" id="PF09336">
    <property type="entry name" value="Vps4_C"/>
    <property type="match status" value="1"/>
</dbReference>
<dbReference type="SMART" id="SM00382">
    <property type="entry name" value="AAA"/>
    <property type="match status" value="1"/>
</dbReference>
<dbReference type="SMART" id="SM00745">
    <property type="entry name" value="MIT"/>
    <property type="match status" value="1"/>
</dbReference>
<dbReference type="SUPFAM" id="SSF116846">
    <property type="entry name" value="MIT domain"/>
    <property type="match status" value="1"/>
</dbReference>
<dbReference type="SUPFAM" id="SSF52540">
    <property type="entry name" value="P-loop containing nucleoside triphosphate hydrolases"/>
    <property type="match status" value="1"/>
</dbReference>
<dbReference type="PROSITE" id="PS00674">
    <property type="entry name" value="AAA"/>
    <property type="match status" value="1"/>
</dbReference>